<keyword id="KW-0378">Hydrolase</keyword>
<keyword id="KW-0460">Magnesium</keyword>
<keyword id="KW-0479">Metal-binding</keyword>
<name>NTDP_STRA1</name>
<reference key="1">
    <citation type="journal article" date="2005" name="Proc. Natl. Acad. Sci. U.S.A.">
        <title>Genome analysis of multiple pathogenic isolates of Streptococcus agalactiae: implications for the microbial 'pan-genome'.</title>
        <authorList>
            <person name="Tettelin H."/>
            <person name="Masignani V."/>
            <person name="Cieslewicz M.J."/>
            <person name="Donati C."/>
            <person name="Medini D."/>
            <person name="Ward N.L."/>
            <person name="Angiuoli S.V."/>
            <person name="Crabtree J."/>
            <person name="Jones A.L."/>
            <person name="Durkin A.S."/>
            <person name="DeBoy R.T."/>
            <person name="Davidsen T.M."/>
            <person name="Mora M."/>
            <person name="Scarselli M."/>
            <person name="Margarit y Ros I."/>
            <person name="Peterson J.D."/>
            <person name="Hauser C.R."/>
            <person name="Sundaram J.P."/>
            <person name="Nelson W.C."/>
            <person name="Madupu R."/>
            <person name="Brinkac L.M."/>
            <person name="Dodson R.J."/>
            <person name="Rosovitz M.J."/>
            <person name="Sullivan S.A."/>
            <person name="Daugherty S.C."/>
            <person name="Haft D.H."/>
            <person name="Selengut J."/>
            <person name="Gwinn M.L."/>
            <person name="Zhou L."/>
            <person name="Zafar N."/>
            <person name="Khouri H."/>
            <person name="Radune D."/>
            <person name="Dimitrov G."/>
            <person name="Watkins K."/>
            <person name="O'Connor K.J."/>
            <person name="Smith S."/>
            <person name="Utterback T.R."/>
            <person name="White O."/>
            <person name="Rubens C.E."/>
            <person name="Grandi G."/>
            <person name="Madoff L.C."/>
            <person name="Kasper D.L."/>
            <person name="Telford J.L."/>
            <person name="Wessels M.R."/>
            <person name="Rappuoli R."/>
            <person name="Fraser C.M."/>
        </authorList>
    </citation>
    <scope>NUCLEOTIDE SEQUENCE [LARGE SCALE GENOMIC DNA]</scope>
    <source>
        <strain>ATCC 27591 / A909 / CDC SS700</strain>
    </source>
</reference>
<gene>
    <name type="ordered locus">SAK_0492</name>
</gene>
<feature type="chain" id="PRO_0000248117" description="Nucleoside triphosphate/diphosphate phosphatase">
    <location>
        <begin position="1"/>
        <end position="177"/>
    </location>
</feature>
<feature type="active site" description="Proton donor" evidence="1">
    <location>
        <position position="23"/>
    </location>
</feature>
<feature type="binding site" evidence="1">
    <location>
        <position position="87"/>
    </location>
    <ligand>
        <name>Mg(2+)</name>
        <dbReference type="ChEBI" id="CHEBI:18420"/>
        <label>1</label>
    </ligand>
</feature>
<feature type="binding site" evidence="1">
    <location>
        <position position="103"/>
    </location>
    <ligand>
        <name>Mg(2+)</name>
        <dbReference type="ChEBI" id="CHEBI:18420"/>
        <label>1</label>
    </ligand>
</feature>
<feature type="binding site" evidence="1">
    <location>
        <position position="105"/>
    </location>
    <ligand>
        <name>Mg(2+)</name>
        <dbReference type="ChEBI" id="CHEBI:18420"/>
        <label>2</label>
    </ligand>
</feature>
<feature type="binding site" evidence="1">
    <location>
        <position position="107"/>
    </location>
    <ligand>
        <name>Mg(2+)</name>
        <dbReference type="ChEBI" id="CHEBI:18420"/>
        <label>1</label>
    </ligand>
</feature>
<feature type="binding site" evidence="1">
    <location>
        <position position="107"/>
    </location>
    <ligand>
        <name>Mg(2+)</name>
        <dbReference type="ChEBI" id="CHEBI:18420"/>
        <label>2</label>
    </ligand>
</feature>
<feature type="binding site" evidence="1">
    <location>
        <position position="120"/>
    </location>
    <ligand>
        <name>Mg(2+)</name>
        <dbReference type="ChEBI" id="CHEBI:18420"/>
        <label>2</label>
    </ligand>
</feature>
<feature type="binding site" evidence="1">
    <location>
        <position position="123"/>
    </location>
    <ligand>
        <name>Mg(2+)</name>
        <dbReference type="ChEBI" id="CHEBI:18420"/>
        <label>2</label>
    </ligand>
</feature>
<organism>
    <name type="scientific">Streptococcus agalactiae serotype Ia (strain ATCC 27591 / A909 / CDC SS700)</name>
    <dbReference type="NCBI Taxonomy" id="205921"/>
    <lineage>
        <taxon>Bacteria</taxon>
        <taxon>Bacillati</taxon>
        <taxon>Bacillota</taxon>
        <taxon>Bacilli</taxon>
        <taxon>Lactobacillales</taxon>
        <taxon>Streptococcaceae</taxon>
        <taxon>Streptococcus</taxon>
    </lineage>
</organism>
<sequence length="177" mass="21168">MRLPKEGDFITIQSYKHDGSLHRTWRDTMVLKTTENALIGVNDHTLVTENDGRRWVTREPAIVYFHKKYWFNIIAMIRETGVSYYCNLASPYILDPEALKYIDYDLDVKVFADGEKRLLDVDEYEQHKAQMNYPTDIDYILKENVKILVEWINENKGPFSSSYINIWYKRYLELKKR</sequence>
<accession>Q3K2X3</accession>
<proteinExistence type="inferred from homology"/>
<evidence type="ECO:0000255" key="1">
    <source>
        <dbReference type="HAMAP-Rule" id="MF_01568"/>
    </source>
</evidence>
<comment type="function">
    <text evidence="1">Has nucleoside phosphatase activity towards nucleoside triphosphates and nucleoside diphosphates.</text>
</comment>
<comment type="catalytic activity">
    <reaction evidence="1">
        <text>a ribonucleoside 5'-triphosphate + H2O = a ribonucleoside 5'-diphosphate + phosphate + H(+)</text>
        <dbReference type="Rhea" id="RHEA:23680"/>
        <dbReference type="ChEBI" id="CHEBI:15377"/>
        <dbReference type="ChEBI" id="CHEBI:15378"/>
        <dbReference type="ChEBI" id="CHEBI:43474"/>
        <dbReference type="ChEBI" id="CHEBI:57930"/>
        <dbReference type="ChEBI" id="CHEBI:61557"/>
        <dbReference type="EC" id="3.6.1.15"/>
    </reaction>
</comment>
<comment type="catalytic activity">
    <reaction evidence="1">
        <text>a ribonucleoside 5'-diphosphate + H2O = a ribonucleoside 5'-phosphate + phosphate + H(+)</text>
        <dbReference type="Rhea" id="RHEA:36799"/>
        <dbReference type="ChEBI" id="CHEBI:15377"/>
        <dbReference type="ChEBI" id="CHEBI:15378"/>
        <dbReference type="ChEBI" id="CHEBI:43474"/>
        <dbReference type="ChEBI" id="CHEBI:57930"/>
        <dbReference type="ChEBI" id="CHEBI:58043"/>
        <dbReference type="EC" id="3.6.1.6"/>
    </reaction>
</comment>
<comment type="cofactor">
    <cofactor evidence="1">
        <name>Mg(2+)</name>
        <dbReference type="ChEBI" id="CHEBI:18420"/>
    </cofactor>
</comment>
<comment type="similarity">
    <text evidence="1">Belongs to the Ntdp family.</text>
</comment>
<dbReference type="EC" id="3.6.1.15" evidence="1"/>
<dbReference type="EC" id="3.6.1.6" evidence="1"/>
<dbReference type="EMBL" id="CP000114">
    <property type="protein sequence ID" value="ABA44873.1"/>
    <property type="molecule type" value="Genomic_DNA"/>
</dbReference>
<dbReference type="RefSeq" id="WP_001239184.1">
    <property type="nucleotide sequence ID" value="NC_007432.1"/>
</dbReference>
<dbReference type="SMR" id="Q3K2X3"/>
<dbReference type="KEGG" id="sak:SAK_0492"/>
<dbReference type="HOGENOM" id="CLU_109787_1_0_9"/>
<dbReference type="GO" id="GO:0000287">
    <property type="term" value="F:magnesium ion binding"/>
    <property type="evidence" value="ECO:0007669"/>
    <property type="project" value="UniProtKB-UniRule"/>
</dbReference>
<dbReference type="GO" id="GO:0017110">
    <property type="term" value="F:nucleoside diphosphate phosphatase activity"/>
    <property type="evidence" value="ECO:0007669"/>
    <property type="project" value="UniProtKB-UniRule"/>
</dbReference>
<dbReference type="GO" id="GO:0017111">
    <property type="term" value="F:ribonucleoside triphosphate phosphatase activity"/>
    <property type="evidence" value="ECO:0007669"/>
    <property type="project" value="UniProtKB-UniRule"/>
</dbReference>
<dbReference type="Gene3D" id="2.40.380.10">
    <property type="entry name" value="FomD-like"/>
    <property type="match status" value="1"/>
</dbReference>
<dbReference type="HAMAP" id="MF_01568">
    <property type="entry name" value="Ntdp"/>
    <property type="match status" value="1"/>
</dbReference>
<dbReference type="InterPro" id="IPR007295">
    <property type="entry name" value="DUF402"/>
</dbReference>
<dbReference type="InterPro" id="IPR035930">
    <property type="entry name" value="FomD-like_sf"/>
</dbReference>
<dbReference type="InterPro" id="IPR050212">
    <property type="entry name" value="Ntdp-like"/>
</dbReference>
<dbReference type="InterPro" id="IPR016882">
    <property type="entry name" value="SA1684"/>
</dbReference>
<dbReference type="NCBIfam" id="NF010183">
    <property type="entry name" value="PRK13662.1"/>
    <property type="match status" value="1"/>
</dbReference>
<dbReference type="PANTHER" id="PTHR39159">
    <property type="match status" value="1"/>
</dbReference>
<dbReference type="PANTHER" id="PTHR39159:SF1">
    <property type="entry name" value="UPF0374 PROTEIN YGAC"/>
    <property type="match status" value="1"/>
</dbReference>
<dbReference type="Pfam" id="PF04167">
    <property type="entry name" value="DUF402"/>
    <property type="match status" value="1"/>
</dbReference>
<dbReference type="PIRSF" id="PIRSF028345">
    <property type="entry name" value="UCP028345"/>
    <property type="match status" value="1"/>
</dbReference>
<dbReference type="SUPFAM" id="SSF159234">
    <property type="entry name" value="FomD-like"/>
    <property type="match status" value="1"/>
</dbReference>
<protein>
    <recommendedName>
        <fullName evidence="1">Nucleoside triphosphate/diphosphate phosphatase</fullName>
        <ecNumber evidence="1">3.6.1.15</ecNumber>
        <ecNumber evidence="1">3.6.1.6</ecNumber>
    </recommendedName>
</protein>